<evidence type="ECO:0000255" key="1">
    <source>
        <dbReference type="HAMAP-Rule" id="MF_00537"/>
    </source>
</evidence>
<evidence type="ECO:0000305" key="2"/>
<organism>
    <name type="scientific">Actinobacillus succinogenes (strain ATCC 55618 / DSM 22257 / CCUG 43843 / 130Z)</name>
    <dbReference type="NCBI Taxonomy" id="339671"/>
    <lineage>
        <taxon>Bacteria</taxon>
        <taxon>Pseudomonadati</taxon>
        <taxon>Pseudomonadota</taxon>
        <taxon>Gammaproteobacteria</taxon>
        <taxon>Pasteurellales</taxon>
        <taxon>Pasteurellaceae</taxon>
        <taxon>Actinobacillus</taxon>
    </lineage>
</organism>
<accession>A6VLK1</accession>
<dbReference type="EMBL" id="CP000746">
    <property type="protein sequence ID" value="ABR73848.1"/>
    <property type="molecule type" value="Genomic_DNA"/>
</dbReference>
<dbReference type="RefSeq" id="WP_012072230.1">
    <property type="nucleotide sequence ID" value="NC_009655.1"/>
</dbReference>
<dbReference type="SMR" id="A6VLK1"/>
<dbReference type="STRING" id="339671.Asuc_0472"/>
<dbReference type="GeneID" id="93226850"/>
<dbReference type="KEGG" id="asu:Asuc_0472"/>
<dbReference type="eggNOG" id="COG0199">
    <property type="taxonomic scope" value="Bacteria"/>
</dbReference>
<dbReference type="HOGENOM" id="CLU_139869_0_1_6"/>
<dbReference type="OrthoDB" id="9810484at2"/>
<dbReference type="Proteomes" id="UP000001114">
    <property type="component" value="Chromosome"/>
</dbReference>
<dbReference type="GO" id="GO:0005737">
    <property type="term" value="C:cytoplasm"/>
    <property type="evidence" value="ECO:0007669"/>
    <property type="project" value="UniProtKB-ARBA"/>
</dbReference>
<dbReference type="GO" id="GO:0015935">
    <property type="term" value="C:small ribosomal subunit"/>
    <property type="evidence" value="ECO:0007669"/>
    <property type="project" value="TreeGrafter"/>
</dbReference>
<dbReference type="GO" id="GO:0019843">
    <property type="term" value="F:rRNA binding"/>
    <property type="evidence" value="ECO:0007669"/>
    <property type="project" value="UniProtKB-UniRule"/>
</dbReference>
<dbReference type="GO" id="GO:0003735">
    <property type="term" value="F:structural constituent of ribosome"/>
    <property type="evidence" value="ECO:0007669"/>
    <property type="project" value="InterPro"/>
</dbReference>
<dbReference type="GO" id="GO:0006412">
    <property type="term" value="P:translation"/>
    <property type="evidence" value="ECO:0007669"/>
    <property type="project" value="UniProtKB-UniRule"/>
</dbReference>
<dbReference type="FunFam" id="1.10.287.1480:FF:000001">
    <property type="entry name" value="30S ribosomal protein S14"/>
    <property type="match status" value="1"/>
</dbReference>
<dbReference type="Gene3D" id="1.10.287.1480">
    <property type="match status" value="1"/>
</dbReference>
<dbReference type="HAMAP" id="MF_00537">
    <property type="entry name" value="Ribosomal_uS14_1"/>
    <property type="match status" value="1"/>
</dbReference>
<dbReference type="InterPro" id="IPR001209">
    <property type="entry name" value="Ribosomal_uS14"/>
</dbReference>
<dbReference type="InterPro" id="IPR023036">
    <property type="entry name" value="Ribosomal_uS14_bac/plastid"/>
</dbReference>
<dbReference type="InterPro" id="IPR018271">
    <property type="entry name" value="Ribosomal_uS14_CS"/>
</dbReference>
<dbReference type="NCBIfam" id="NF006477">
    <property type="entry name" value="PRK08881.1"/>
    <property type="match status" value="1"/>
</dbReference>
<dbReference type="PANTHER" id="PTHR19836">
    <property type="entry name" value="30S RIBOSOMAL PROTEIN S14"/>
    <property type="match status" value="1"/>
</dbReference>
<dbReference type="PANTHER" id="PTHR19836:SF19">
    <property type="entry name" value="SMALL RIBOSOMAL SUBUNIT PROTEIN US14M"/>
    <property type="match status" value="1"/>
</dbReference>
<dbReference type="Pfam" id="PF00253">
    <property type="entry name" value="Ribosomal_S14"/>
    <property type="match status" value="1"/>
</dbReference>
<dbReference type="SUPFAM" id="SSF57716">
    <property type="entry name" value="Glucocorticoid receptor-like (DNA-binding domain)"/>
    <property type="match status" value="1"/>
</dbReference>
<dbReference type="PROSITE" id="PS00527">
    <property type="entry name" value="RIBOSOMAL_S14"/>
    <property type="match status" value="1"/>
</dbReference>
<name>RS14_ACTSZ</name>
<reference key="1">
    <citation type="journal article" date="2010" name="BMC Genomics">
        <title>A genomic perspective on the potential of Actinobacillus succinogenes for industrial succinate production.</title>
        <authorList>
            <person name="McKinlay J.B."/>
            <person name="Laivenieks M."/>
            <person name="Schindler B.D."/>
            <person name="McKinlay A.A."/>
            <person name="Siddaramappa S."/>
            <person name="Challacombe J.F."/>
            <person name="Lowry S.R."/>
            <person name="Clum A."/>
            <person name="Lapidus A.L."/>
            <person name="Burkhart K.B."/>
            <person name="Harkins V."/>
            <person name="Vieille C."/>
        </authorList>
    </citation>
    <scope>NUCLEOTIDE SEQUENCE [LARGE SCALE GENOMIC DNA]</scope>
    <source>
        <strain>ATCC 55618 / DSM 22257 / CCUG 43843 / 130Z</strain>
    </source>
</reference>
<protein>
    <recommendedName>
        <fullName evidence="1">Small ribosomal subunit protein uS14</fullName>
    </recommendedName>
    <alternativeName>
        <fullName evidence="2">30S ribosomal protein S14</fullName>
    </alternativeName>
</protein>
<keyword id="KW-1185">Reference proteome</keyword>
<keyword id="KW-0687">Ribonucleoprotein</keyword>
<keyword id="KW-0689">Ribosomal protein</keyword>
<keyword id="KW-0694">RNA-binding</keyword>
<keyword id="KW-0699">rRNA-binding</keyword>
<feature type="chain" id="PRO_1000128285" description="Small ribosomal subunit protein uS14">
    <location>
        <begin position="1"/>
        <end position="101"/>
    </location>
</feature>
<sequence length="101" mass="11666">MAKQSMKARDVKRVKLAEKFYAKRMELKKIISDANSSDEDRWDAVLKLQSLPRDASPSRQRNRCRQTGRPHGVLRKFGLSRIKVREAAMRGEIPGLKKASW</sequence>
<gene>
    <name evidence="1" type="primary">rpsN</name>
    <name type="ordered locus">Asuc_0472</name>
</gene>
<comment type="function">
    <text evidence="1">Binds 16S rRNA, required for the assembly of 30S particles and may also be responsible for determining the conformation of the 16S rRNA at the A site.</text>
</comment>
<comment type="subunit">
    <text evidence="1">Part of the 30S ribosomal subunit. Contacts proteins S3 and S10.</text>
</comment>
<comment type="similarity">
    <text evidence="1">Belongs to the universal ribosomal protein uS14 family.</text>
</comment>
<proteinExistence type="inferred from homology"/>